<organism>
    <name type="scientific">Glycine max</name>
    <name type="common">Soybean</name>
    <name type="synonym">Glycine hispida</name>
    <dbReference type="NCBI Taxonomy" id="3847"/>
    <lineage>
        <taxon>Eukaryota</taxon>
        <taxon>Viridiplantae</taxon>
        <taxon>Streptophyta</taxon>
        <taxon>Embryophyta</taxon>
        <taxon>Tracheophyta</taxon>
        <taxon>Spermatophyta</taxon>
        <taxon>Magnoliopsida</taxon>
        <taxon>eudicotyledons</taxon>
        <taxon>Gunneridae</taxon>
        <taxon>Pentapetalae</taxon>
        <taxon>rosids</taxon>
        <taxon>fabids</taxon>
        <taxon>Fabales</taxon>
        <taxon>Fabaceae</taxon>
        <taxon>Papilionoideae</taxon>
        <taxon>50 kb inversion clade</taxon>
        <taxon>NPAAA clade</taxon>
        <taxon>indigoferoid/millettioid clade</taxon>
        <taxon>Phaseoleae</taxon>
        <taxon>Glycine</taxon>
        <taxon>Glycine subgen. Soja</taxon>
    </lineage>
</organism>
<accession>Q02921</accession>
<comment type="subcellular location">
    <subcellularLocation>
        <location evidence="2">Membrane</location>
        <topology evidence="2">Single-pass membrane protein</topology>
    </subcellularLocation>
</comment>
<comment type="developmental stage">
    <text>Expressed at early stages of nodule development.</text>
</comment>
<name>NO93_SOYBN</name>
<sequence>MAKGNSPLERPSLASLDQKLAFAKRCSHEGVLAGAKAAVVASVASAIPTLASVRMLPWARANLNHTAQALIISTATAAAYFIVADKTVLATARKNSFNQPSNSEA</sequence>
<keyword id="KW-0472">Membrane</keyword>
<keyword id="KW-0536">Nodulation</keyword>
<keyword id="KW-1185">Reference proteome</keyword>
<keyword id="KW-0812">Transmembrane</keyword>
<keyword id="KW-1133">Transmembrane helix</keyword>
<evidence type="ECO:0000255" key="1"/>
<evidence type="ECO:0000305" key="2"/>
<proteinExistence type="evidence at transcript level"/>
<feature type="chain" id="PRO_0000213735" description="Early nodulin-93">
    <location>
        <begin position="1"/>
        <end position="105"/>
    </location>
</feature>
<feature type="transmembrane region" description="Helical" evidence="1">
    <location>
        <begin position="66"/>
        <end position="83"/>
    </location>
</feature>
<dbReference type="EMBL" id="D13506">
    <property type="protein sequence ID" value="BAA02724.1"/>
    <property type="molecule type" value="mRNA"/>
</dbReference>
<dbReference type="PIR" id="S34801">
    <property type="entry name" value="S34801"/>
</dbReference>
<dbReference type="RefSeq" id="NP_001237669.1">
    <property type="nucleotide sequence ID" value="NM_001250740.2"/>
</dbReference>
<dbReference type="STRING" id="3847.Q02921"/>
<dbReference type="PaxDb" id="3847-GLYMA06G24760.1"/>
<dbReference type="EnsemblPlants" id="KRH54885">
    <property type="protein sequence ID" value="KRH54885"/>
    <property type="gene ID" value="GLYMA_06G216500"/>
</dbReference>
<dbReference type="GeneID" id="547773"/>
<dbReference type="Gramene" id="KRH54885">
    <property type="protein sequence ID" value="KRH54885"/>
    <property type="gene ID" value="GLYMA_06G216500"/>
</dbReference>
<dbReference type="KEGG" id="gmx:547773"/>
<dbReference type="eggNOG" id="ENOG502S16W">
    <property type="taxonomic scope" value="Eukaryota"/>
</dbReference>
<dbReference type="HOGENOM" id="CLU_129521_2_0_1"/>
<dbReference type="InParanoid" id="Q02921"/>
<dbReference type="OMA" id="NTFHEQM"/>
<dbReference type="OrthoDB" id="1937323at2759"/>
<dbReference type="Proteomes" id="UP000008827">
    <property type="component" value="Chromosome 6"/>
</dbReference>
<dbReference type="GO" id="GO:0016020">
    <property type="term" value="C:membrane"/>
    <property type="evidence" value="ECO:0007669"/>
    <property type="project" value="UniProtKB-SubCell"/>
</dbReference>
<dbReference type="GO" id="GO:0009877">
    <property type="term" value="P:nodulation"/>
    <property type="evidence" value="ECO:0007669"/>
    <property type="project" value="UniProtKB-KW"/>
</dbReference>
<dbReference type="InterPro" id="IPR005050">
    <property type="entry name" value="Enod93"/>
</dbReference>
<dbReference type="PANTHER" id="PTHR33605">
    <property type="entry name" value="EARLY NODULIN-93"/>
    <property type="match status" value="1"/>
</dbReference>
<dbReference type="PANTHER" id="PTHR33605:SF2">
    <property type="entry name" value="EARLY NODULIN-93"/>
    <property type="match status" value="1"/>
</dbReference>
<dbReference type="Pfam" id="PF03386">
    <property type="entry name" value="ENOD93"/>
    <property type="match status" value="1"/>
</dbReference>
<reference key="1">
    <citation type="journal article" date="1993" name="Mol. Gen. Genet.">
        <title>Isolation and characterization of novel nodulin cDNAs representing genes expressed at early stages of soybean nodule development.</title>
        <authorList>
            <person name="Kouchi H."/>
            <person name="Hata S."/>
        </authorList>
    </citation>
    <scope>NUCLEOTIDE SEQUENCE [MRNA]</scope>
    <source>
        <strain>cv. Akisengoku</strain>
    </source>
</reference>
<protein>
    <recommendedName>
        <fullName>Early nodulin-93</fullName>
        <shortName>N-93</shortName>
    </recommendedName>
</protein>